<gene>
    <name evidence="1" type="primary">mdh</name>
    <name type="ordered locus">HD_0264</name>
</gene>
<sequence>MKVTVLGAAGGIGQTLSLLLKLRLPAGADLALYDISPVTPGIAVDISHIPTSVNAIGYAGEDPSVALKDPSVALKDTNLVIITAGIARKPGMTRADLFNINAGIVKDLVEKVAEVCPMACIGIVTNPVNTLVPIAAEVLRKAGVYDKSKLFGVTTLDVVRAKTFVSELKHKNVETVTVPVVGGHSGTTILPLLSQALAEGRLLDFSQTEIESLTQRIKNAGTEVVEAKAGGGSATLSMAESGARFALAVFKALLGEDCVRYAYVQSKEGSGYPEFFAHPVRFGLKGIEEILPIAPLNEYEQTQFEELKPILEADIELGKKFVNP</sequence>
<dbReference type="EC" id="1.1.1.37" evidence="1"/>
<dbReference type="EMBL" id="AE017143">
    <property type="protein sequence ID" value="AAP95246.1"/>
    <property type="molecule type" value="Genomic_DNA"/>
</dbReference>
<dbReference type="RefSeq" id="WP_010944299.1">
    <property type="nucleotide sequence ID" value="NC_002940.2"/>
</dbReference>
<dbReference type="SMR" id="Q7VP41"/>
<dbReference type="STRING" id="233412.HD_0264"/>
<dbReference type="KEGG" id="hdu:HD_0264"/>
<dbReference type="eggNOG" id="COG0039">
    <property type="taxonomic scope" value="Bacteria"/>
</dbReference>
<dbReference type="HOGENOM" id="CLU_047181_0_1_6"/>
<dbReference type="OrthoDB" id="9802969at2"/>
<dbReference type="Proteomes" id="UP000001022">
    <property type="component" value="Chromosome"/>
</dbReference>
<dbReference type="GO" id="GO:0005737">
    <property type="term" value="C:cytoplasm"/>
    <property type="evidence" value="ECO:0007669"/>
    <property type="project" value="TreeGrafter"/>
</dbReference>
<dbReference type="GO" id="GO:0030060">
    <property type="term" value="F:L-malate dehydrogenase (NAD+) activity"/>
    <property type="evidence" value="ECO:0007669"/>
    <property type="project" value="UniProtKB-UniRule"/>
</dbReference>
<dbReference type="GO" id="GO:0006108">
    <property type="term" value="P:malate metabolic process"/>
    <property type="evidence" value="ECO:0007669"/>
    <property type="project" value="InterPro"/>
</dbReference>
<dbReference type="GO" id="GO:0006099">
    <property type="term" value="P:tricarboxylic acid cycle"/>
    <property type="evidence" value="ECO:0007669"/>
    <property type="project" value="UniProtKB-UniRule"/>
</dbReference>
<dbReference type="CDD" id="cd01337">
    <property type="entry name" value="MDH_glyoxysomal_mitochondrial"/>
    <property type="match status" value="1"/>
</dbReference>
<dbReference type="FunFam" id="3.40.50.720:FF:000268">
    <property type="entry name" value="Malate dehydrogenase"/>
    <property type="match status" value="1"/>
</dbReference>
<dbReference type="FunFam" id="3.90.110.10:FF:000001">
    <property type="entry name" value="Malate dehydrogenase"/>
    <property type="match status" value="1"/>
</dbReference>
<dbReference type="Gene3D" id="3.90.110.10">
    <property type="entry name" value="Lactate dehydrogenase/glycoside hydrolase, family 4, C-terminal"/>
    <property type="match status" value="1"/>
</dbReference>
<dbReference type="Gene3D" id="3.40.50.720">
    <property type="entry name" value="NAD(P)-binding Rossmann-like Domain"/>
    <property type="match status" value="1"/>
</dbReference>
<dbReference type="HAMAP" id="MF_01516">
    <property type="entry name" value="Malate_dehydrog_1"/>
    <property type="match status" value="1"/>
</dbReference>
<dbReference type="InterPro" id="IPR001557">
    <property type="entry name" value="L-lactate/malate_DH"/>
</dbReference>
<dbReference type="InterPro" id="IPR022383">
    <property type="entry name" value="Lactate/malate_DH_C"/>
</dbReference>
<dbReference type="InterPro" id="IPR001236">
    <property type="entry name" value="Lactate/malate_DH_N"/>
</dbReference>
<dbReference type="InterPro" id="IPR015955">
    <property type="entry name" value="Lactate_DH/Glyco_Ohase_4_C"/>
</dbReference>
<dbReference type="InterPro" id="IPR001252">
    <property type="entry name" value="Malate_DH_AS"/>
</dbReference>
<dbReference type="InterPro" id="IPR010097">
    <property type="entry name" value="Malate_DH_type1"/>
</dbReference>
<dbReference type="InterPro" id="IPR023958">
    <property type="entry name" value="Malate_DH_type1_bac"/>
</dbReference>
<dbReference type="InterPro" id="IPR036291">
    <property type="entry name" value="NAD(P)-bd_dom_sf"/>
</dbReference>
<dbReference type="NCBIfam" id="TIGR01772">
    <property type="entry name" value="MDH_euk_gproteo"/>
    <property type="match status" value="1"/>
</dbReference>
<dbReference type="PANTHER" id="PTHR11540">
    <property type="entry name" value="MALATE AND LACTATE DEHYDROGENASE"/>
    <property type="match status" value="1"/>
</dbReference>
<dbReference type="PANTHER" id="PTHR11540:SF16">
    <property type="entry name" value="MALATE DEHYDROGENASE, MITOCHONDRIAL"/>
    <property type="match status" value="1"/>
</dbReference>
<dbReference type="Pfam" id="PF02866">
    <property type="entry name" value="Ldh_1_C"/>
    <property type="match status" value="1"/>
</dbReference>
<dbReference type="Pfam" id="PF00056">
    <property type="entry name" value="Ldh_1_N"/>
    <property type="match status" value="1"/>
</dbReference>
<dbReference type="PIRSF" id="PIRSF000102">
    <property type="entry name" value="Lac_mal_DH"/>
    <property type="match status" value="1"/>
</dbReference>
<dbReference type="SUPFAM" id="SSF56327">
    <property type="entry name" value="LDH C-terminal domain-like"/>
    <property type="match status" value="1"/>
</dbReference>
<dbReference type="SUPFAM" id="SSF51735">
    <property type="entry name" value="NAD(P)-binding Rossmann-fold domains"/>
    <property type="match status" value="1"/>
</dbReference>
<dbReference type="PROSITE" id="PS00068">
    <property type="entry name" value="MDH"/>
    <property type="match status" value="1"/>
</dbReference>
<evidence type="ECO:0000255" key="1">
    <source>
        <dbReference type="HAMAP-Rule" id="MF_01516"/>
    </source>
</evidence>
<organism>
    <name type="scientific">Haemophilus ducreyi (strain 35000HP / ATCC 700724)</name>
    <dbReference type="NCBI Taxonomy" id="233412"/>
    <lineage>
        <taxon>Bacteria</taxon>
        <taxon>Pseudomonadati</taxon>
        <taxon>Pseudomonadota</taxon>
        <taxon>Gammaproteobacteria</taxon>
        <taxon>Pasteurellales</taxon>
        <taxon>Pasteurellaceae</taxon>
        <taxon>Haemophilus</taxon>
    </lineage>
</organism>
<comment type="function">
    <text evidence="1">Catalyzes the reversible oxidation of malate to oxaloacetate.</text>
</comment>
<comment type="catalytic activity">
    <reaction evidence="1">
        <text>(S)-malate + NAD(+) = oxaloacetate + NADH + H(+)</text>
        <dbReference type="Rhea" id="RHEA:21432"/>
        <dbReference type="ChEBI" id="CHEBI:15378"/>
        <dbReference type="ChEBI" id="CHEBI:15589"/>
        <dbReference type="ChEBI" id="CHEBI:16452"/>
        <dbReference type="ChEBI" id="CHEBI:57540"/>
        <dbReference type="ChEBI" id="CHEBI:57945"/>
        <dbReference type="EC" id="1.1.1.37"/>
    </reaction>
</comment>
<comment type="subunit">
    <text evidence="1">Homodimer.</text>
</comment>
<comment type="similarity">
    <text evidence="1">Belongs to the LDH/MDH superfamily. MDH type 1 family.</text>
</comment>
<reference key="1">
    <citation type="submission" date="2003-06" db="EMBL/GenBank/DDBJ databases">
        <title>The complete genome sequence of Haemophilus ducreyi.</title>
        <authorList>
            <person name="Munson R.S. Jr."/>
            <person name="Ray W.C."/>
            <person name="Mahairas G."/>
            <person name="Sabo P."/>
            <person name="Mungur R."/>
            <person name="Johnson L."/>
            <person name="Nguyen D."/>
            <person name="Wang J."/>
            <person name="Forst C."/>
            <person name="Hood L."/>
        </authorList>
    </citation>
    <scope>NUCLEOTIDE SEQUENCE [LARGE SCALE GENOMIC DNA]</scope>
    <source>
        <strain>35000HP / ATCC 700724</strain>
    </source>
</reference>
<proteinExistence type="inferred from homology"/>
<feature type="chain" id="PRO_0000113305" description="Malate dehydrogenase">
    <location>
        <begin position="1"/>
        <end position="324"/>
    </location>
</feature>
<feature type="active site" description="Proton acceptor" evidence="1">
    <location>
        <position position="184"/>
    </location>
</feature>
<feature type="binding site" evidence="1">
    <location>
        <begin position="7"/>
        <end position="13"/>
    </location>
    <ligand>
        <name>NAD(+)</name>
        <dbReference type="ChEBI" id="CHEBI:57540"/>
    </ligand>
</feature>
<feature type="binding site" evidence="1">
    <location>
        <position position="34"/>
    </location>
    <ligand>
        <name>NAD(+)</name>
        <dbReference type="ChEBI" id="CHEBI:57540"/>
    </ligand>
</feature>
<feature type="binding site" evidence="1">
    <location>
        <position position="88"/>
    </location>
    <ligand>
        <name>substrate</name>
    </ligand>
</feature>
<feature type="binding site" evidence="1">
    <location>
        <position position="94"/>
    </location>
    <ligand>
        <name>substrate</name>
    </ligand>
</feature>
<feature type="binding site" evidence="1">
    <location>
        <position position="101"/>
    </location>
    <ligand>
        <name>NAD(+)</name>
        <dbReference type="ChEBI" id="CHEBI:57540"/>
    </ligand>
</feature>
<feature type="binding site" evidence="1">
    <location>
        <begin position="124"/>
        <end position="126"/>
    </location>
    <ligand>
        <name>NAD(+)</name>
        <dbReference type="ChEBI" id="CHEBI:57540"/>
    </ligand>
</feature>
<feature type="binding site" evidence="1">
    <location>
        <position position="126"/>
    </location>
    <ligand>
        <name>substrate</name>
    </ligand>
</feature>
<feature type="binding site" evidence="1">
    <location>
        <position position="160"/>
    </location>
    <ligand>
        <name>substrate</name>
    </ligand>
</feature>
<feature type="binding site" evidence="1">
    <location>
        <position position="238"/>
    </location>
    <ligand>
        <name>NAD(+)</name>
        <dbReference type="ChEBI" id="CHEBI:57540"/>
    </ligand>
</feature>
<accession>Q7VP41</accession>
<name>MDH_HAEDU</name>
<protein>
    <recommendedName>
        <fullName evidence="1">Malate dehydrogenase</fullName>
        <ecNumber evidence="1">1.1.1.37</ecNumber>
    </recommendedName>
</protein>
<keyword id="KW-0520">NAD</keyword>
<keyword id="KW-0560">Oxidoreductase</keyword>
<keyword id="KW-1185">Reference proteome</keyword>
<keyword id="KW-0816">Tricarboxylic acid cycle</keyword>